<gene>
    <name type="primary">fba</name>
    <name type="synonym">fbaA</name>
    <name type="ordered locus">SAV2125</name>
</gene>
<evidence type="ECO:0000250" key="1"/>
<evidence type="ECO:0000305" key="2"/>
<dbReference type="EC" id="4.1.2.13"/>
<dbReference type="EMBL" id="BA000017">
    <property type="protein sequence ID" value="BAB58287.1"/>
    <property type="molecule type" value="Genomic_DNA"/>
</dbReference>
<dbReference type="SMR" id="P67477"/>
<dbReference type="KEGG" id="sav:SAV2125"/>
<dbReference type="HOGENOM" id="CLU_040088_0_1_9"/>
<dbReference type="PhylomeDB" id="P67477"/>
<dbReference type="UniPathway" id="UPA00109">
    <property type="reaction ID" value="UER00183"/>
</dbReference>
<dbReference type="Proteomes" id="UP000002481">
    <property type="component" value="Chromosome"/>
</dbReference>
<dbReference type="GO" id="GO:0004332">
    <property type="term" value="F:fructose-bisphosphate aldolase activity"/>
    <property type="evidence" value="ECO:0007669"/>
    <property type="project" value="UniProtKB-EC"/>
</dbReference>
<dbReference type="GO" id="GO:0008270">
    <property type="term" value="F:zinc ion binding"/>
    <property type="evidence" value="ECO:0007669"/>
    <property type="project" value="InterPro"/>
</dbReference>
<dbReference type="GO" id="GO:0030388">
    <property type="term" value="P:fructose 1,6-bisphosphate metabolic process"/>
    <property type="evidence" value="ECO:0007669"/>
    <property type="project" value="InterPro"/>
</dbReference>
<dbReference type="GO" id="GO:0006096">
    <property type="term" value="P:glycolytic process"/>
    <property type="evidence" value="ECO:0007669"/>
    <property type="project" value="UniProtKB-UniPathway"/>
</dbReference>
<dbReference type="CDD" id="cd00947">
    <property type="entry name" value="TBP_aldolase_IIB"/>
    <property type="match status" value="1"/>
</dbReference>
<dbReference type="Gene3D" id="3.20.20.70">
    <property type="entry name" value="Aldolase class I"/>
    <property type="match status" value="1"/>
</dbReference>
<dbReference type="InterPro" id="IPR013785">
    <property type="entry name" value="Aldolase_TIM"/>
</dbReference>
<dbReference type="InterPro" id="IPR050246">
    <property type="entry name" value="Class_II_FBP_aldolase"/>
</dbReference>
<dbReference type="InterPro" id="IPR000771">
    <property type="entry name" value="FBA_II"/>
</dbReference>
<dbReference type="InterPro" id="IPR011289">
    <property type="entry name" value="Fruc_bis_ald_class-2"/>
</dbReference>
<dbReference type="NCBIfam" id="TIGR00167">
    <property type="entry name" value="cbbA"/>
    <property type="match status" value="1"/>
</dbReference>
<dbReference type="NCBIfam" id="TIGR01859">
    <property type="entry name" value="fruc_bis_ald"/>
    <property type="match status" value="1"/>
</dbReference>
<dbReference type="NCBIfam" id="NF006376">
    <property type="entry name" value="PRK08610.1"/>
    <property type="match status" value="1"/>
</dbReference>
<dbReference type="PANTHER" id="PTHR30304">
    <property type="entry name" value="D-TAGATOSE-1,6-BISPHOSPHATE ALDOLASE"/>
    <property type="match status" value="1"/>
</dbReference>
<dbReference type="PANTHER" id="PTHR30304:SF0">
    <property type="entry name" value="D-TAGATOSE-1,6-BISPHOSPHATE ALDOLASE SUBUNIT GATY-RELATED"/>
    <property type="match status" value="1"/>
</dbReference>
<dbReference type="Pfam" id="PF01116">
    <property type="entry name" value="F_bP_aldolase"/>
    <property type="match status" value="1"/>
</dbReference>
<dbReference type="PIRSF" id="PIRSF001359">
    <property type="entry name" value="F_bP_aldolase_II"/>
    <property type="match status" value="1"/>
</dbReference>
<dbReference type="SUPFAM" id="SSF51569">
    <property type="entry name" value="Aldolase"/>
    <property type="match status" value="1"/>
</dbReference>
<dbReference type="PROSITE" id="PS00806">
    <property type="entry name" value="ALDOLASE_CLASS_II_2"/>
    <property type="match status" value="1"/>
</dbReference>
<accession>P67477</accession>
<accession>Q99SD3</accession>
<reference key="1">
    <citation type="journal article" date="2001" name="Lancet">
        <title>Whole genome sequencing of meticillin-resistant Staphylococcus aureus.</title>
        <authorList>
            <person name="Kuroda M."/>
            <person name="Ohta T."/>
            <person name="Uchiyama I."/>
            <person name="Baba T."/>
            <person name="Yuzawa H."/>
            <person name="Kobayashi I."/>
            <person name="Cui L."/>
            <person name="Oguchi A."/>
            <person name="Aoki K."/>
            <person name="Nagai Y."/>
            <person name="Lian J.-Q."/>
            <person name="Ito T."/>
            <person name="Kanamori M."/>
            <person name="Matsumaru H."/>
            <person name="Maruyama A."/>
            <person name="Murakami H."/>
            <person name="Hosoyama A."/>
            <person name="Mizutani-Ui Y."/>
            <person name="Takahashi N.K."/>
            <person name="Sawano T."/>
            <person name="Inoue R."/>
            <person name="Kaito C."/>
            <person name="Sekimizu K."/>
            <person name="Hirakawa H."/>
            <person name="Kuhara S."/>
            <person name="Goto S."/>
            <person name="Yabuzaki J."/>
            <person name="Kanehisa M."/>
            <person name="Yamashita A."/>
            <person name="Oshima K."/>
            <person name="Furuya K."/>
            <person name="Yoshino C."/>
            <person name="Shiba T."/>
            <person name="Hattori M."/>
            <person name="Ogasawara N."/>
            <person name="Hayashi H."/>
            <person name="Hiramatsu K."/>
        </authorList>
    </citation>
    <scope>NUCLEOTIDE SEQUENCE [LARGE SCALE GENOMIC DNA]</scope>
    <source>
        <strain>Mu50 / ATCC 700699</strain>
    </source>
</reference>
<sequence length="286" mass="30836">MPLVSMKEMLIDAKENGYAVGQYNINNLEFTQAILEASQEENAPVILGVSEGAARYMSGFYTIVKMVEGLMHDLNITIPVAIHLDHGSSFEKCKEAIDAGFTSVMIDASHSPFEENVATTKKVVEYAHEKGVSVEAELGTVGGQEDDVVADGIIYADPKECQELVEKTGIDALAPALGSVHGPYKGEPKLGFKEMEEIGLSTGLPLVLHGGTGIPTKDIQKAIPFGTAKINVNTENQIASAKAVRDVLNNDKEVYDPRKYLGPAREAIKETVKGKIKEFGTSNRAK</sequence>
<proteinExistence type="inferred from homology"/>
<keyword id="KW-0324">Glycolysis</keyword>
<keyword id="KW-0456">Lyase</keyword>
<keyword id="KW-0479">Metal-binding</keyword>
<keyword id="KW-0862">Zinc</keyword>
<name>ALF2_STAAM</name>
<protein>
    <recommendedName>
        <fullName>Fructose-bisphosphate aldolase</fullName>
        <shortName>FBP aldolase</shortName>
        <shortName>FBPA</shortName>
        <ecNumber>4.1.2.13</ecNumber>
    </recommendedName>
    <alternativeName>
        <fullName>Fructose-1,6-bisphosphate aldolase</fullName>
    </alternativeName>
</protein>
<comment type="function">
    <text evidence="1">Catalyzes the aldol condensation of dihydroxyacetone phosphate (DHAP or glycerone-phosphate) with glyceraldehyde 3-phosphate (G3P) to form fructose 1,6-bisphosphate (FBP) in gluconeogenesis and the reverse reaction in glycolysis.</text>
</comment>
<comment type="catalytic activity">
    <reaction>
        <text>beta-D-fructose 1,6-bisphosphate = D-glyceraldehyde 3-phosphate + dihydroxyacetone phosphate</text>
        <dbReference type="Rhea" id="RHEA:14729"/>
        <dbReference type="ChEBI" id="CHEBI:32966"/>
        <dbReference type="ChEBI" id="CHEBI:57642"/>
        <dbReference type="ChEBI" id="CHEBI:59776"/>
        <dbReference type="EC" id="4.1.2.13"/>
    </reaction>
</comment>
<comment type="cofactor">
    <cofactor evidence="1">
        <name>Zn(2+)</name>
        <dbReference type="ChEBI" id="CHEBI:29105"/>
    </cofactor>
    <text evidence="1">Binds 2 Zn(2+) ions per subunit. One is catalytic and the other provides a structural contribution.</text>
</comment>
<comment type="pathway">
    <text>Carbohydrate degradation; glycolysis; D-glyceraldehyde 3-phosphate and glycerone phosphate from D-glucose: step 4/4.</text>
</comment>
<comment type="similarity">
    <text evidence="2">Belongs to the class II fructose-bisphosphate aldolase family.</text>
</comment>
<organism>
    <name type="scientific">Staphylococcus aureus (strain Mu50 / ATCC 700699)</name>
    <dbReference type="NCBI Taxonomy" id="158878"/>
    <lineage>
        <taxon>Bacteria</taxon>
        <taxon>Bacillati</taxon>
        <taxon>Bacillota</taxon>
        <taxon>Bacilli</taxon>
        <taxon>Bacillales</taxon>
        <taxon>Staphylococcaceae</taxon>
        <taxon>Staphylococcus</taxon>
    </lineage>
</organism>
<feature type="chain" id="PRO_0000178736" description="Fructose-bisphosphate aldolase">
    <location>
        <begin position="1"/>
        <end position="286"/>
    </location>
</feature>
<feature type="active site" description="Proton donor" evidence="1">
    <location>
        <position position="85"/>
    </location>
</feature>
<feature type="binding site" evidence="1">
    <location>
        <position position="50"/>
    </location>
    <ligand>
        <name>D-glyceraldehyde 3-phosphate</name>
        <dbReference type="ChEBI" id="CHEBI:59776"/>
    </ligand>
</feature>
<feature type="binding site" evidence="1">
    <location>
        <position position="86"/>
    </location>
    <ligand>
        <name>Zn(2+)</name>
        <dbReference type="ChEBI" id="CHEBI:29105"/>
        <label>1</label>
        <note>catalytic</note>
    </ligand>
</feature>
<feature type="binding site" evidence="1">
    <location>
        <position position="107"/>
    </location>
    <ligand>
        <name>Zn(2+)</name>
        <dbReference type="ChEBI" id="CHEBI:29105"/>
        <label>2</label>
    </ligand>
</feature>
<feature type="binding site" evidence="1">
    <location>
        <position position="137"/>
    </location>
    <ligand>
        <name>Zn(2+)</name>
        <dbReference type="ChEBI" id="CHEBI:29105"/>
        <label>2</label>
    </ligand>
</feature>
<feature type="binding site" evidence="1">
    <location>
        <position position="181"/>
    </location>
    <ligand>
        <name>Zn(2+)</name>
        <dbReference type="ChEBI" id="CHEBI:29105"/>
        <label>1</label>
        <note>catalytic</note>
    </ligand>
</feature>
<feature type="binding site" evidence="1">
    <location>
        <position position="182"/>
    </location>
    <ligand>
        <name>dihydroxyacetone phosphate</name>
        <dbReference type="ChEBI" id="CHEBI:57642"/>
    </ligand>
</feature>
<feature type="binding site" evidence="1">
    <location>
        <position position="209"/>
    </location>
    <ligand>
        <name>Zn(2+)</name>
        <dbReference type="ChEBI" id="CHEBI:29105"/>
        <label>1</label>
        <note>catalytic</note>
    </ligand>
</feature>
<feature type="binding site" evidence="1">
    <location>
        <begin position="210"/>
        <end position="212"/>
    </location>
    <ligand>
        <name>dihydroxyacetone phosphate</name>
        <dbReference type="ChEBI" id="CHEBI:57642"/>
    </ligand>
</feature>
<feature type="binding site" evidence="1">
    <location>
        <begin position="231"/>
        <end position="234"/>
    </location>
    <ligand>
        <name>dihydroxyacetone phosphate</name>
        <dbReference type="ChEBI" id="CHEBI:57642"/>
    </ligand>
</feature>